<dbReference type="EC" id="6.1.1.11" evidence="1"/>
<dbReference type="EMBL" id="AP007281">
    <property type="protein sequence ID" value="BAG24607.1"/>
    <property type="molecule type" value="Genomic_DNA"/>
</dbReference>
<dbReference type="RefSeq" id="WP_003669649.1">
    <property type="nucleotide sequence ID" value="NC_010609.1"/>
</dbReference>
<dbReference type="SMR" id="B2G575"/>
<dbReference type="KEGG" id="lrf:LAR_0091"/>
<dbReference type="HOGENOM" id="CLU_023797_1_1_9"/>
<dbReference type="UniPathway" id="UPA00906">
    <property type="reaction ID" value="UER00895"/>
</dbReference>
<dbReference type="GO" id="GO:0005737">
    <property type="term" value="C:cytoplasm"/>
    <property type="evidence" value="ECO:0007669"/>
    <property type="project" value="UniProtKB-SubCell"/>
</dbReference>
<dbReference type="GO" id="GO:0005524">
    <property type="term" value="F:ATP binding"/>
    <property type="evidence" value="ECO:0007669"/>
    <property type="project" value="UniProtKB-UniRule"/>
</dbReference>
<dbReference type="GO" id="GO:0140096">
    <property type="term" value="F:catalytic activity, acting on a protein"/>
    <property type="evidence" value="ECO:0007669"/>
    <property type="project" value="UniProtKB-ARBA"/>
</dbReference>
<dbReference type="GO" id="GO:0004828">
    <property type="term" value="F:serine-tRNA ligase activity"/>
    <property type="evidence" value="ECO:0007669"/>
    <property type="project" value="UniProtKB-UniRule"/>
</dbReference>
<dbReference type="GO" id="GO:0016740">
    <property type="term" value="F:transferase activity"/>
    <property type="evidence" value="ECO:0007669"/>
    <property type="project" value="UniProtKB-ARBA"/>
</dbReference>
<dbReference type="GO" id="GO:0016260">
    <property type="term" value="P:selenocysteine biosynthetic process"/>
    <property type="evidence" value="ECO:0007669"/>
    <property type="project" value="UniProtKB-UniRule"/>
</dbReference>
<dbReference type="GO" id="GO:0006434">
    <property type="term" value="P:seryl-tRNA aminoacylation"/>
    <property type="evidence" value="ECO:0007669"/>
    <property type="project" value="UniProtKB-UniRule"/>
</dbReference>
<dbReference type="CDD" id="cd00770">
    <property type="entry name" value="SerRS_core"/>
    <property type="match status" value="1"/>
</dbReference>
<dbReference type="Gene3D" id="3.30.930.10">
    <property type="entry name" value="Bira Bifunctional Protein, Domain 2"/>
    <property type="match status" value="1"/>
</dbReference>
<dbReference type="Gene3D" id="1.10.287.40">
    <property type="entry name" value="Serine-tRNA synthetase, tRNA binding domain"/>
    <property type="match status" value="1"/>
</dbReference>
<dbReference type="HAMAP" id="MF_00176">
    <property type="entry name" value="Ser_tRNA_synth_type1"/>
    <property type="match status" value="1"/>
</dbReference>
<dbReference type="InterPro" id="IPR002314">
    <property type="entry name" value="aa-tRNA-synt_IIb"/>
</dbReference>
<dbReference type="InterPro" id="IPR006195">
    <property type="entry name" value="aa-tRNA-synth_II"/>
</dbReference>
<dbReference type="InterPro" id="IPR045864">
    <property type="entry name" value="aa-tRNA-synth_II/BPL/LPL"/>
</dbReference>
<dbReference type="InterPro" id="IPR002317">
    <property type="entry name" value="Ser-tRNA-ligase_type_1"/>
</dbReference>
<dbReference type="InterPro" id="IPR015866">
    <property type="entry name" value="Ser-tRNA-synth_1_N"/>
</dbReference>
<dbReference type="InterPro" id="IPR042103">
    <property type="entry name" value="SerRS_1_N_sf"/>
</dbReference>
<dbReference type="InterPro" id="IPR033729">
    <property type="entry name" value="SerRS_core"/>
</dbReference>
<dbReference type="InterPro" id="IPR010978">
    <property type="entry name" value="tRNA-bd_arm"/>
</dbReference>
<dbReference type="NCBIfam" id="TIGR00414">
    <property type="entry name" value="serS"/>
    <property type="match status" value="1"/>
</dbReference>
<dbReference type="PANTHER" id="PTHR43697:SF1">
    <property type="entry name" value="SERINE--TRNA LIGASE"/>
    <property type="match status" value="1"/>
</dbReference>
<dbReference type="PANTHER" id="PTHR43697">
    <property type="entry name" value="SERYL-TRNA SYNTHETASE"/>
    <property type="match status" value="1"/>
</dbReference>
<dbReference type="Pfam" id="PF02403">
    <property type="entry name" value="Seryl_tRNA_N"/>
    <property type="match status" value="1"/>
</dbReference>
<dbReference type="Pfam" id="PF00587">
    <property type="entry name" value="tRNA-synt_2b"/>
    <property type="match status" value="1"/>
</dbReference>
<dbReference type="PIRSF" id="PIRSF001529">
    <property type="entry name" value="Ser-tRNA-synth_IIa"/>
    <property type="match status" value="1"/>
</dbReference>
<dbReference type="PRINTS" id="PR00981">
    <property type="entry name" value="TRNASYNTHSER"/>
</dbReference>
<dbReference type="SUPFAM" id="SSF55681">
    <property type="entry name" value="Class II aaRS and biotin synthetases"/>
    <property type="match status" value="1"/>
</dbReference>
<dbReference type="SUPFAM" id="SSF46589">
    <property type="entry name" value="tRNA-binding arm"/>
    <property type="match status" value="1"/>
</dbReference>
<dbReference type="PROSITE" id="PS50862">
    <property type="entry name" value="AA_TRNA_LIGASE_II"/>
    <property type="match status" value="1"/>
</dbReference>
<sequence>MLDIKKIRQEPDFYKEKLATRGVKPEEIDEVIALDKKRRELLQQTETMKAQRNEASKKIGEAKRNGESADAAIKETRELGDKIKELDTEVEANDAELHDKMAHLPNVPHDGVPVSLTEDGAVELRKVGKVRDFDFEPKHHWDIGENLGILDFDRAGKVSGARFVYYLGLGAQLERAVYNFMLDEHMKEGYTEVLPPYIVNADSMYGTGQFPKFKEGVYQVNGEDMTLIPTAEVPLTNYYRGEVIPTEELPVYVTALTPSFRSEAGAAGRDTRGLIRMHQFNKVEMVKYTKPENSWDELEKMTANAENILKKLNLPYHVITLTTGDMSFTASETHDLELWMPAQNKYREVSSCSNCLDFQARRMHTQYRDENGKLQYVHTLNGSGLAVGRTVAAILENYQNADGSVTIPEVLVPYMHGVTKITKENAVPFRNKVNK</sequence>
<accession>B2G575</accession>
<organism>
    <name type="scientific">Limosilactobacillus reuteri subsp. reuteri (strain JCM 1112)</name>
    <name type="common">Lactobacillus reuteri</name>
    <dbReference type="NCBI Taxonomy" id="557433"/>
    <lineage>
        <taxon>Bacteria</taxon>
        <taxon>Bacillati</taxon>
        <taxon>Bacillota</taxon>
        <taxon>Bacilli</taxon>
        <taxon>Lactobacillales</taxon>
        <taxon>Lactobacillaceae</taxon>
        <taxon>Limosilactobacillus</taxon>
    </lineage>
</organism>
<keyword id="KW-0030">Aminoacyl-tRNA synthetase</keyword>
<keyword id="KW-0067">ATP-binding</keyword>
<keyword id="KW-0963">Cytoplasm</keyword>
<keyword id="KW-0436">Ligase</keyword>
<keyword id="KW-0547">Nucleotide-binding</keyword>
<keyword id="KW-0648">Protein biosynthesis</keyword>
<comment type="function">
    <text evidence="1">Catalyzes the attachment of serine to tRNA(Ser). Is also able to aminoacylate tRNA(Sec) with serine, to form the misacylated tRNA L-seryl-tRNA(Sec), which will be further converted into selenocysteinyl-tRNA(Sec).</text>
</comment>
<comment type="catalytic activity">
    <reaction evidence="1">
        <text>tRNA(Ser) + L-serine + ATP = L-seryl-tRNA(Ser) + AMP + diphosphate + H(+)</text>
        <dbReference type="Rhea" id="RHEA:12292"/>
        <dbReference type="Rhea" id="RHEA-COMP:9669"/>
        <dbReference type="Rhea" id="RHEA-COMP:9703"/>
        <dbReference type="ChEBI" id="CHEBI:15378"/>
        <dbReference type="ChEBI" id="CHEBI:30616"/>
        <dbReference type="ChEBI" id="CHEBI:33019"/>
        <dbReference type="ChEBI" id="CHEBI:33384"/>
        <dbReference type="ChEBI" id="CHEBI:78442"/>
        <dbReference type="ChEBI" id="CHEBI:78533"/>
        <dbReference type="ChEBI" id="CHEBI:456215"/>
        <dbReference type="EC" id="6.1.1.11"/>
    </reaction>
</comment>
<comment type="catalytic activity">
    <reaction evidence="1">
        <text>tRNA(Sec) + L-serine + ATP = L-seryl-tRNA(Sec) + AMP + diphosphate + H(+)</text>
        <dbReference type="Rhea" id="RHEA:42580"/>
        <dbReference type="Rhea" id="RHEA-COMP:9742"/>
        <dbReference type="Rhea" id="RHEA-COMP:10128"/>
        <dbReference type="ChEBI" id="CHEBI:15378"/>
        <dbReference type="ChEBI" id="CHEBI:30616"/>
        <dbReference type="ChEBI" id="CHEBI:33019"/>
        <dbReference type="ChEBI" id="CHEBI:33384"/>
        <dbReference type="ChEBI" id="CHEBI:78442"/>
        <dbReference type="ChEBI" id="CHEBI:78533"/>
        <dbReference type="ChEBI" id="CHEBI:456215"/>
        <dbReference type="EC" id="6.1.1.11"/>
    </reaction>
</comment>
<comment type="pathway">
    <text evidence="1">Aminoacyl-tRNA biosynthesis; selenocysteinyl-tRNA(Sec) biosynthesis; L-seryl-tRNA(Sec) from L-serine and tRNA(Sec): step 1/1.</text>
</comment>
<comment type="subunit">
    <text evidence="1">Homodimer. The tRNA molecule binds across the dimer.</text>
</comment>
<comment type="subcellular location">
    <subcellularLocation>
        <location evidence="1">Cytoplasm</location>
    </subcellularLocation>
</comment>
<comment type="domain">
    <text evidence="1">Consists of two distinct domains, a catalytic core and a N-terminal extension that is involved in tRNA binding.</text>
</comment>
<comment type="similarity">
    <text evidence="1">Belongs to the class-II aminoacyl-tRNA synthetase family. Type-1 seryl-tRNA synthetase subfamily.</text>
</comment>
<evidence type="ECO:0000255" key="1">
    <source>
        <dbReference type="HAMAP-Rule" id="MF_00176"/>
    </source>
</evidence>
<evidence type="ECO:0000256" key="2">
    <source>
        <dbReference type="SAM" id="MobiDB-lite"/>
    </source>
</evidence>
<proteinExistence type="inferred from homology"/>
<name>SYS_LIMRJ</name>
<feature type="chain" id="PRO_1000098085" description="Serine--tRNA ligase">
    <location>
        <begin position="1"/>
        <end position="435"/>
    </location>
</feature>
<feature type="region of interest" description="Disordered" evidence="2">
    <location>
        <begin position="48"/>
        <end position="68"/>
    </location>
</feature>
<feature type="compositionally biased region" description="Basic and acidic residues" evidence="2">
    <location>
        <begin position="49"/>
        <end position="68"/>
    </location>
</feature>
<feature type="binding site" evidence="1">
    <location>
        <begin position="230"/>
        <end position="232"/>
    </location>
    <ligand>
        <name>L-serine</name>
        <dbReference type="ChEBI" id="CHEBI:33384"/>
    </ligand>
</feature>
<feature type="binding site" evidence="1">
    <location>
        <begin position="261"/>
        <end position="263"/>
    </location>
    <ligand>
        <name>ATP</name>
        <dbReference type="ChEBI" id="CHEBI:30616"/>
    </ligand>
</feature>
<feature type="binding site" evidence="1">
    <location>
        <position position="284"/>
    </location>
    <ligand>
        <name>L-serine</name>
        <dbReference type="ChEBI" id="CHEBI:33384"/>
    </ligand>
</feature>
<feature type="binding site" evidence="1">
    <location>
        <begin position="348"/>
        <end position="351"/>
    </location>
    <ligand>
        <name>ATP</name>
        <dbReference type="ChEBI" id="CHEBI:30616"/>
    </ligand>
</feature>
<feature type="binding site" evidence="1">
    <location>
        <position position="383"/>
    </location>
    <ligand>
        <name>L-serine</name>
        <dbReference type="ChEBI" id="CHEBI:33384"/>
    </ligand>
</feature>
<gene>
    <name evidence="1" type="primary">serS</name>
    <name type="ordered locus">LAR_0091</name>
</gene>
<reference key="1">
    <citation type="journal article" date="2008" name="DNA Res.">
        <title>Comparative genome analysis of Lactobacillus reuteri and Lactobacillus fermentum reveal a genomic island for reuterin and cobalamin production.</title>
        <authorList>
            <person name="Morita H."/>
            <person name="Toh H."/>
            <person name="Fukuda S."/>
            <person name="Horikawa H."/>
            <person name="Oshima K."/>
            <person name="Suzuki T."/>
            <person name="Murakami M."/>
            <person name="Hisamatsu S."/>
            <person name="Kato Y."/>
            <person name="Takizawa T."/>
            <person name="Fukuoka H."/>
            <person name="Yoshimura T."/>
            <person name="Itoh K."/>
            <person name="O'Sullivan D.J."/>
            <person name="McKay L.L."/>
            <person name="Ohno H."/>
            <person name="Kikuchi J."/>
            <person name="Masaoka T."/>
            <person name="Hattori M."/>
        </authorList>
    </citation>
    <scope>NUCLEOTIDE SEQUENCE [LARGE SCALE GENOMIC DNA]</scope>
    <source>
        <strain>JCM 1112</strain>
    </source>
</reference>
<protein>
    <recommendedName>
        <fullName evidence="1">Serine--tRNA ligase</fullName>
        <ecNumber evidence="1">6.1.1.11</ecNumber>
    </recommendedName>
    <alternativeName>
        <fullName evidence="1">Seryl-tRNA synthetase</fullName>
        <shortName evidence="1">SerRS</shortName>
    </alternativeName>
    <alternativeName>
        <fullName evidence="1">Seryl-tRNA(Ser/Sec) synthetase</fullName>
    </alternativeName>
</protein>